<keyword id="KW-0067">ATP-binding</keyword>
<keyword id="KW-0963">Cytoplasm</keyword>
<keyword id="KW-0206">Cytoskeleton</keyword>
<keyword id="KW-0378">Hydrolase</keyword>
<keyword id="KW-0547">Nucleotide-binding</keyword>
<evidence type="ECO:0000250" key="1">
    <source>
        <dbReference type="UniProtKB" id="P68137"/>
    </source>
</evidence>
<evidence type="ECO:0000305" key="2"/>
<name>ACT1_PODCA</name>
<comment type="function">
    <text>Actins are highly conserved proteins that are involved in various types of cell motility and are ubiquitously expressed in all eukaryotic cells.</text>
</comment>
<comment type="catalytic activity">
    <reaction evidence="1">
        <text>ATP + H2O = ADP + phosphate + H(+)</text>
        <dbReference type="Rhea" id="RHEA:13065"/>
        <dbReference type="ChEBI" id="CHEBI:15377"/>
        <dbReference type="ChEBI" id="CHEBI:15378"/>
        <dbReference type="ChEBI" id="CHEBI:30616"/>
        <dbReference type="ChEBI" id="CHEBI:43474"/>
        <dbReference type="ChEBI" id="CHEBI:456216"/>
    </reaction>
</comment>
<comment type="subcellular location">
    <subcellularLocation>
        <location>Cytoplasm</location>
        <location>Cytoskeleton</location>
    </subcellularLocation>
</comment>
<comment type="miscellaneous">
    <text>There are at least six actin genes in Podocoryne carnea.</text>
</comment>
<comment type="similarity">
    <text evidence="2">Belongs to the actin family.</text>
</comment>
<reference key="1">
    <citation type="journal article" date="1993" name="Gene">
        <title>Actin-encoding genes of the hydrozoan Podocoryne carnea.</title>
        <authorList>
            <person name="Aerne B.L."/>
            <person name="Schmid V."/>
            <person name="Schuchert P."/>
        </authorList>
    </citation>
    <scope>NUCLEOTIDE SEQUENCE [MRNA]</scope>
</reference>
<sequence length="376" mass="41767">MADDDVAALVVDNGSGMCKAGFAGDDAPRAVFPSIVGRPRHQGVMVGMGQKDSYVGDEAQSKRGILTLKYPIEHGIVTNWDDMEKIWHHTFYNELRVAPEEHPVLLTEAPLNPKANREKMTQIMFETFNSPAMYVAIQAVLSLYASGRTTGIVLDSGDGVSHTVPIYEGYALPHAIIRLDLAGRDLTDYMMKILTERGYSFTTTAEREIVRDIKEKLAYVALDFEQEMQTAASSSSLEKSYELPDGQVITIGNERFRDPEALFQPAFLGMESAGIHETTYNSIMKCDVDIRKDLYANTVLSGGTTMFPGIADRMQKEISSLAPPTMKIKIIAPPERKYSVWIGGSILASLSTFQQMWISKQEYDESGPSIVHRKCF</sequence>
<dbReference type="EC" id="3.6.4.-" evidence="1"/>
<dbReference type="EMBL" id="X69058">
    <property type="protein sequence ID" value="CAA48796.1"/>
    <property type="molecule type" value="mRNA"/>
</dbReference>
<dbReference type="EMBL" id="X69059">
    <property type="protein sequence ID" value="CAA48797.1"/>
    <property type="molecule type" value="mRNA"/>
</dbReference>
<dbReference type="PIR" id="JN0833">
    <property type="entry name" value="JN0833"/>
</dbReference>
<dbReference type="SMR" id="P41112"/>
<dbReference type="GO" id="GO:0005737">
    <property type="term" value="C:cytoplasm"/>
    <property type="evidence" value="ECO:0007669"/>
    <property type="project" value="UniProtKB-KW"/>
</dbReference>
<dbReference type="GO" id="GO:0005856">
    <property type="term" value="C:cytoskeleton"/>
    <property type="evidence" value="ECO:0007669"/>
    <property type="project" value="UniProtKB-SubCell"/>
</dbReference>
<dbReference type="GO" id="GO:0005524">
    <property type="term" value="F:ATP binding"/>
    <property type="evidence" value="ECO:0007669"/>
    <property type="project" value="UniProtKB-KW"/>
</dbReference>
<dbReference type="GO" id="GO:0016787">
    <property type="term" value="F:hydrolase activity"/>
    <property type="evidence" value="ECO:0007669"/>
    <property type="project" value="UniProtKB-KW"/>
</dbReference>
<dbReference type="CDD" id="cd10224">
    <property type="entry name" value="ASKHA_NBD_actin"/>
    <property type="match status" value="1"/>
</dbReference>
<dbReference type="FunFam" id="2.30.36.70:FF:000001">
    <property type="entry name" value="Actin, alpha skeletal muscle"/>
    <property type="match status" value="1"/>
</dbReference>
<dbReference type="FunFam" id="3.30.420.40:FF:000131">
    <property type="entry name" value="Actin, alpha skeletal muscle"/>
    <property type="match status" value="1"/>
</dbReference>
<dbReference type="FunFam" id="3.30.420.40:FF:000291">
    <property type="entry name" value="Actin, alpha skeletal muscle"/>
    <property type="match status" value="1"/>
</dbReference>
<dbReference type="FunFam" id="3.90.640.10:FF:000047">
    <property type="entry name" value="Actin, alpha skeletal muscle"/>
    <property type="match status" value="1"/>
</dbReference>
<dbReference type="FunFam" id="3.30.420.40:FF:000058">
    <property type="entry name" value="Putative actin-related protein 5"/>
    <property type="match status" value="1"/>
</dbReference>
<dbReference type="Gene3D" id="3.30.420.40">
    <property type="match status" value="2"/>
</dbReference>
<dbReference type="Gene3D" id="3.90.640.10">
    <property type="entry name" value="Actin, Chain A, domain 4"/>
    <property type="match status" value="1"/>
</dbReference>
<dbReference type="InterPro" id="IPR004000">
    <property type="entry name" value="Actin"/>
</dbReference>
<dbReference type="InterPro" id="IPR020902">
    <property type="entry name" value="Actin/actin-like_CS"/>
</dbReference>
<dbReference type="InterPro" id="IPR004001">
    <property type="entry name" value="Actin_CS"/>
</dbReference>
<dbReference type="InterPro" id="IPR043129">
    <property type="entry name" value="ATPase_NBD"/>
</dbReference>
<dbReference type="PANTHER" id="PTHR11937">
    <property type="entry name" value="ACTIN"/>
    <property type="match status" value="1"/>
</dbReference>
<dbReference type="Pfam" id="PF00022">
    <property type="entry name" value="Actin"/>
    <property type="match status" value="1"/>
</dbReference>
<dbReference type="PRINTS" id="PR00190">
    <property type="entry name" value="ACTIN"/>
</dbReference>
<dbReference type="SMART" id="SM00268">
    <property type="entry name" value="ACTIN"/>
    <property type="match status" value="1"/>
</dbReference>
<dbReference type="SUPFAM" id="SSF53067">
    <property type="entry name" value="Actin-like ATPase domain"/>
    <property type="match status" value="2"/>
</dbReference>
<dbReference type="PROSITE" id="PS00406">
    <property type="entry name" value="ACTINS_1"/>
    <property type="match status" value="1"/>
</dbReference>
<dbReference type="PROSITE" id="PS00432">
    <property type="entry name" value="ACTINS_2"/>
    <property type="match status" value="1"/>
</dbReference>
<dbReference type="PROSITE" id="PS01132">
    <property type="entry name" value="ACTINS_ACT_LIKE"/>
    <property type="match status" value="1"/>
</dbReference>
<accession>P41112</accession>
<organism>
    <name type="scientific">Podocoryna carnea</name>
    <name type="common">Hydrozoan</name>
    <dbReference type="NCBI Taxonomy" id="6096"/>
    <lineage>
        <taxon>Eukaryota</taxon>
        <taxon>Metazoa</taxon>
        <taxon>Cnidaria</taxon>
        <taxon>Hydrozoa</taxon>
        <taxon>Hydroidolina</taxon>
        <taxon>Anthoathecata</taxon>
        <taxon>Filifera</taxon>
        <taxon>Hydractiniidae</taxon>
        <taxon>Podocoryna</taxon>
    </lineage>
</organism>
<feature type="chain" id="PRO_0000088997" description="Actin-1/2">
    <location>
        <begin position="1"/>
        <end position="376"/>
    </location>
</feature>
<proteinExistence type="evidence at transcript level"/>
<gene>
    <name type="primary">ACTIA</name>
</gene>
<gene>
    <name type="primary">ACTIIB</name>
</gene>
<protein>
    <recommendedName>
        <fullName>Actin-1/2</fullName>
        <ecNumber evidence="1">3.6.4.-</ecNumber>
    </recommendedName>
</protein>